<dbReference type="EMBL" id="AF325178">
    <property type="protein sequence ID" value="AAG49583.1"/>
    <property type="molecule type" value="mRNA"/>
</dbReference>
<dbReference type="EMBL" id="BX284605">
    <property type="protein sequence ID" value="CAB01249.2"/>
    <property type="molecule type" value="Genomic_DNA"/>
</dbReference>
<dbReference type="PIR" id="T26192">
    <property type="entry name" value="T26192"/>
</dbReference>
<dbReference type="RefSeq" id="NP_505958.1">
    <property type="nucleotide sequence ID" value="NM_073557.7"/>
</dbReference>
<dbReference type="SMR" id="Q23175"/>
<dbReference type="BioGRID" id="44628">
    <property type="interactions" value="7"/>
</dbReference>
<dbReference type="FunCoup" id="Q23175">
    <property type="interactions" value="19"/>
</dbReference>
<dbReference type="IntAct" id="Q23175">
    <property type="interactions" value="1"/>
</dbReference>
<dbReference type="STRING" id="6239.W05E10.3.1"/>
<dbReference type="PaxDb" id="6239-W05E10.3"/>
<dbReference type="EnsemblMetazoa" id="W05E10.3.1">
    <property type="protein sequence ID" value="W05E10.3.1"/>
    <property type="gene ID" value="WBGene00000453"/>
</dbReference>
<dbReference type="GeneID" id="179603"/>
<dbReference type="KEGG" id="cel:CELE_W05E10.3"/>
<dbReference type="UCSC" id="W05E10.3.1">
    <property type="organism name" value="c. elegans"/>
</dbReference>
<dbReference type="AGR" id="WB:WBGene00000453"/>
<dbReference type="CTD" id="179603"/>
<dbReference type="WormBase" id="W05E10.3">
    <property type="protein sequence ID" value="CE29364"/>
    <property type="gene ID" value="WBGene00000453"/>
    <property type="gene designation" value="ceh-32"/>
</dbReference>
<dbReference type="eggNOG" id="KOG0775">
    <property type="taxonomic scope" value="Eukaryota"/>
</dbReference>
<dbReference type="GeneTree" id="ENSGT00940000169263"/>
<dbReference type="HOGENOM" id="CLU_049495_0_0_1"/>
<dbReference type="InParanoid" id="Q23175"/>
<dbReference type="OMA" id="EMWHEAH"/>
<dbReference type="OrthoDB" id="3501850at2759"/>
<dbReference type="SignaLink" id="Q23175"/>
<dbReference type="PRO" id="PR:Q23175"/>
<dbReference type="Proteomes" id="UP000001940">
    <property type="component" value="Chromosome V"/>
</dbReference>
<dbReference type="Bgee" id="WBGene00000453">
    <property type="expression patterns" value="Expressed in pharyngeal muscle cell (C elegans) and 3 other cell types or tissues"/>
</dbReference>
<dbReference type="GO" id="GO:0005634">
    <property type="term" value="C:nucleus"/>
    <property type="evidence" value="ECO:0000314"/>
    <property type="project" value="WormBase"/>
</dbReference>
<dbReference type="GO" id="GO:0005667">
    <property type="term" value="C:transcription regulator complex"/>
    <property type="evidence" value="ECO:0000318"/>
    <property type="project" value="GO_Central"/>
</dbReference>
<dbReference type="GO" id="GO:0003700">
    <property type="term" value="F:DNA-binding transcription factor activity"/>
    <property type="evidence" value="ECO:0000250"/>
    <property type="project" value="WormBase"/>
</dbReference>
<dbReference type="GO" id="GO:0000981">
    <property type="term" value="F:DNA-binding transcription factor activity, RNA polymerase II-specific"/>
    <property type="evidence" value="ECO:0000318"/>
    <property type="project" value="GO_Central"/>
</dbReference>
<dbReference type="GO" id="GO:0000978">
    <property type="term" value="F:RNA polymerase II cis-regulatory region sequence-specific DNA binding"/>
    <property type="evidence" value="ECO:0000318"/>
    <property type="project" value="GO_Central"/>
</dbReference>
<dbReference type="GO" id="GO:0030182">
    <property type="term" value="P:neuron differentiation"/>
    <property type="evidence" value="ECO:0000315"/>
    <property type="project" value="UniProtKB"/>
</dbReference>
<dbReference type="GO" id="GO:0009886">
    <property type="term" value="P:post-embryonic animal morphogenesis"/>
    <property type="evidence" value="ECO:0000315"/>
    <property type="project" value="WormBase"/>
</dbReference>
<dbReference type="GO" id="GO:0006355">
    <property type="term" value="P:regulation of DNA-templated transcription"/>
    <property type="evidence" value="ECO:0000304"/>
    <property type="project" value="WormBase"/>
</dbReference>
<dbReference type="GO" id="GO:0006357">
    <property type="term" value="P:regulation of transcription by RNA polymerase II"/>
    <property type="evidence" value="ECO:0000318"/>
    <property type="project" value="GO_Central"/>
</dbReference>
<dbReference type="CDD" id="cd00086">
    <property type="entry name" value="homeodomain"/>
    <property type="match status" value="1"/>
</dbReference>
<dbReference type="FunFam" id="1.10.10.60:FF:000046">
    <property type="entry name" value="SIX homeobox 3"/>
    <property type="match status" value="1"/>
</dbReference>
<dbReference type="Gene3D" id="1.10.10.60">
    <property type="entry name" value="Homeodomain-like"/>
    <property type="match status" value="1"/>
</dbReference>
<dbReference type="InterPro" id="IPR001356">
    <property type="entry name" value="HD"/>
</dbReference>
<dbReference type="InterPro" id="IPR009057">
    <property type="entry name" value="Homeodomain-like_sf"/>
</dbReference>
<dbReference type="InterPro" id="IPR031701">
    <property type="entry name" value="SIX1_SD"/>
</dbReference>
<dbReference type="PANTHER" id="PTHR10390">
    <property type="entry name" value="HOMEOBOX PROTEIN SIX"/>
    <property type="match status" value="1"/>
</dbReference>
<dbReference type="PANTHER" id="PTHR10390:SF33">
    <property type="entry name" value="PROTEIN OPTIX"/>
    <property type="match status" value="1"/>
</dbReference>
<dbReference type="Pfam" id="PF00046">
    <property type="entry name" value="Homeodomain"/>
    <property type="match status" value="1"/>
</dbReference>
<dbReference type="Pfam" id="PF16878">
    <property type="entry name" value="SIX1_SD"/>
    <property type="match status" value="1"/>
</dbReference>
<dbReference type="SMART" id="SM00389">
    <property type="entry name" value="HOX"/>
    <property type="match status" value="1"/>
</dbReference>
<dbReference type="SUPFAM" id="SSF46689">
    <property type="entry name" value="Homeodomain-like"/>
    <property type="match status" value="1"/>
</dbReference>
<dbReference type="PROSITE" id="PS50071">
    <property type="entry name" value="HOMEOBOX_2"/>
    <property type="match status" value="1"/>
</dbReference>
<feature type="chain" id="PRO_0000048998" description="Homeobox protein ceh-32">
    <location>
        <begin position="1"/>
        <end position="439"/>
    </location>
</feature>
<feature type="DNA-binding region" description="Homeobox" evidence="1">
    <location>
        <begin position="183"/>
        <end position="243"/>
    </location>
</feature>
<feature type="region of interest" description="Disordered" evidence="2">
    <location>
        <begin position="253"/>
        <end position="293"/>
    </location>
</feature>
<feature type="region of interest" description="Disordered" evidence="2">
    <location>
        <begin position="344"/>
        <end position="365"/>
    </location>
</feature>
<feature type="region of interest" description="Disordered" evidence="2">
    <location>
        <begin position="379"/>
        <end position="439"/>
    </location>
</feature>
<feature type="compositionally biased region" description="Acidic residues" evidence="2">
    <location>
        <begin position="264"/>
        <end position="274"/>
    </location>
</feature>
<feature type="compositionally biased region" description="Acidic residues" evidence="2">
    <location>
        <begin position="344"/>
        <end position="358"/>
    </location>
</feature>
<feature type="compositionally biased region" description="Polar residues" evidence="2">
    <location>
        <begin position="379"/>
        <end position="392"/>
    </location>
</feature>
<feature type="compositionally biased region" description="Basic and acidic residues" evidence="2">
    <location>
        <begin position="398"/>
        <end position="428"/>
    </location>
</feature>
<name>HM32_CAEEL</name>
<gene>
    <name evidence="7" type="primary">ceh-32</name>
    <name evidence="7" type="ORF">W05E10.3</name>
</gene>
<reference key="1">
    <citation type="journal article" date="2001" name="Dev. Biol.">
        <title>The Caenorhabditis elegans Six/sine oculis class homeobox gene ceh-32 is required for head morphogenesis.</title>
        <authorList>
            <person name="Dozier C."/>
            <person name="Kagoshima H."/>
            <person name="Niklaus G."/>
            <person name="Cassata G."/>
            <person name="Buerglin T.R."/>
        </authorList>
    </citation>
    <scope>NUCLEOTIDE SEQUENCE [MRNA]</scope>
    <scope>FUNCTION</scope>
    <scope>SUBCELLULAR LOCATION</scope>
    <scope>TISSUE SPECIFICITY</scope>
    <scope>DEVELOPMENTAL STAGE</scope>
    <scope>DISRUPTION PHENOTYPE</scope>
    <source>
        <tissue>Embryo</tissue>
    </source>
</reference>
<reference key="2">
    <citation type="journal article" date="1998" name="Science">
        <title>Genome sequence of the nematode C. elegans: a platform for investigating biology.</title>
        <authorList>
            <consortium name="The C. elegans sequencing consortium"/>
        </authorList>
    </citation>
    <scope>NUCLEOTIDE SEQUENCE [LARGE SCALE GENOMIC DNA]</scope>
    <source>
        <strain>Bristol N2</strain>
    </source>
</reference>
<reference key="3">
    <citation type="journal article" date="2005" name="J. Biol. Chem.">
        <title>Caenorhabditis elegans geminin homologue participates in cell cycle regulation and germ line development.</title>
        <authorList>
            <person name="Yanagi K."/>
            <person name="Mizuno T."/>
            <person name="Tsuyama T."/>
            <person name="Tada S."/>
            <person name="Iida Y."/>
            <person name="Sugimoto A."/>
            <person name="Eki T."/>
            <person name="Enomoto T."/>
            <person name="Hanaoka F."/>
        </authorList>
    </citation>
    <scope>INTERACTION WITH GMN-1</scope>
</reference>
<reference key="4">
    <citation type="journal article" date="2019" name="Development">
        <title>Lineage context switches the function of a C. elegans Pax6 homolog in determining a neuronal fate.</title>
        <authorList>
            <person name="Brandt J.P."/>
            <person name="Rossillo M."/>
            <person name="Du Z."/>
            <person name="Ichikawa D."/>
            <person name="Barnes K."/>
            <person name="Chen A."/>
            <person name="Noyes M."/>
            <person name="Bao Z."/>
            <person name="Ringstad N."/>
        </authorList>
    </citation>
    <scope>FUNCTION</scope>
    <scope>TISSUE SPECIFICITY</scope>
</reference>
<reference key="5">
    <citation type="journal article" date="2020" name="Nature">
        <title>Unique homeobox codes delineate all the neuron classes of C. elegans.</title>
        <authorList>
            <person name="Reilly M.B."/>
            <person name="Cros C."/>
            <person name="Varol E."/>
            <person name="Yemini E."/>
            <person name="Hobert O."/>
        </authorList>
    </citation>
    <scope>FUNCTION</scope>
    <scope>TISSUE SPECIFICITY</scope>
</reference>
<sequence>MFTPEQFTKVMSQLGNFSQLGQMFQPGNVAMLQALQANGASSTPSLFPAMPSVIPSLAAPSSPTTSNLTADQIVKTCEQLETDGDVDGLFRFMCTIPPQKTQEVAGNEAFLRARALVCFHASHFRELYAILENNKFSPKYHPKLQEMWHEAHYREQEKNRGKSLCAVDKYRVRKKYPMPRTIWDGEQKTHCFKERTRSLLREWYLKDPYPNPPKKKELANATGLTQMQVGNWFKNRRQRDRAAAAKNKQNIIGVELKKTSSDMSDSDDDFEDSMTDSPSPIDEPKDLSKSHIPKLSPTLLPKMATPFDMFAAAANPLMMLNLNPALYMQFHNFFNTMRNPQIDEEENSETTVEVEADIEPPKKRSKLSIDEILNIKSEVSPSQCSPCSNESLSPKRAVKTEEVKKEDDEAAEEDSRSVKSETSEDPKHSSPKSTTSQSE</sequence>
<organism>
    <name type="scientific">Caenorhabditis elegans</name>
    <dbReference type="NCBI Taxonomy" id="6239"/>
    <lineage>
        <taxon>Eukaryota</taxon>
        <taxon>Metazoa</taxon>
        <taxon>Ecdysozoa</taxon>
        <taxon>Nematoda</taxon>
        <taxon>Chromadorea</taxon>
        <taxon>Rhabditida</taxon>
        <taxon>Rhabditina</taxon>
        <taxon>Rhabditomorpha</taxon>
        <taxon>Rhabditoidea</taxon>
        <taxon>Rhabditidae</taxon>
        <taxon>Peloderinae</taxon>
        <taxon>Caenorhabditis</taxon>
    </lineage>
</organism>
<accession>Q23175</accession>
<accession>Q9BMH2</accession>
<protein>
    <recommendedName>
        <fullName>Homeobox protein ceh-32</fullName>
    </recommendedName>
</protein>
<keyword id="KW-0217">Developmental protein</keyword>
<keyword id="KW-0238">DNA-binding</keyword>
<keyword id="KW-0371">Homeobox</keyword>
<keyword id="KW-0539">Nucleus</keyword>
<keyword id="KW-1185">Reference proteome</keyword>
<keyword id="KW-0804">Transcription</keyword>
<keyword id="KW-0805">Transcription regulation</keyword>
<evidence type="ECO:0000255" key="1">
    <source>
        <dbReference type="PROSITE-ProRule" id="PRU00108"/>
    </source>
</evidence>
<evidence type="ECO:0000256" key="2">
    <source>
        <dbReference type="SAM" id="MobiDB-lite"/>
    </source>
</evidence>
<evidence type="ECO:0000269" key="3">
    <source>
    </source>
</evidence>
<evidence type="ECO:0000269" key="4">
    <source>
    </source>
</evidence>
<evidence type="ECO:0000269" key="5">
    <source>
    </source>
</evidence>
<evidence type="ECO:0000305" key="6"/>
<evidence type="ECO:0000312" key="7">
    <source>
        <dbReference type="WormBase" id="W05E10.3"/>
    </source>
</evidence>
<comment type="function">
    <text evidence="3 5">Transcription factor which binds a motif with the core sequence 5'-GTATCA-3' (PubMed:30890567). Plays a role in head morphogenesis (PubMed:11476572). Involved in embryonic development (PubMed:32814896). Required for cell specification of the RIA interneurons (PubMed:32814896). May cooperate with the transcription factor vab-3 and phosphatase eya-1 to repress transcription factor ets-5 expression in non BAG neuronal cells (PubMed:30890567).</text>
</comment>
<comment type="subunit">
    <text evidence="4">Interacts with gmn-1.</text>
</comment>
<comment type="subcellular location">
    <subcellularLocation>
        <location evidence="3">Nucleus</location>
    </subcellularLocation>
</comment>
<comment type="tissue specificity">
    <text evidence="3 5">Expressed in the posterior gonad (PubMed:11476572). Expressed in some cells in the head that are probably neurons (PubMed:30890567). Expressed in the dorsal and ventral neuron RMD pair and the inner labial neuron class IL1 (PubMed:32814896). Not expressed in BAG neurons (PubMed:30890567).</text>
</comment>
<comment type="developmental stage">
    <text evidence="3">Expression starts during embryonic gastrulation and persists through to adults (PubMed:11476572). Expressed in neuronal precursor cells during embryogenesis (PubMed:11476572). Upon hatching, expression is also seen in sheath/spermatheca precursor cells and later in gonadal sheath cells (PubMed:11476572). Expressed in head hypodermal cells (hyp3, hyp4, hyp5 and hyp6) in larvae (PubMed:11476572).</text>
</comment>
<comment type="disruption phenotype">
    <text evidence="3">RNAi-mediated knockdown in hermaphrodite adults causes embryonic and larval lethality and head morphogenesis defects in L1 and L2 larval stages of offspring.</text>
</comment>
<comment type="similarity">
    <text evidence="6">Belongs to the SIX/Sine oculis homeobox family.</text>
</comment>
<proteinExistence type="evidence at protein level"/>